<comment type="function">
    <text evidence="4 7 8">Binds to actin filaments in muscle and non-muscle cells (PubMed:22812662, PubMed:7568216). Plays a central role, in association with the troponin complex, in the calcium dependent regulation of vertebrate striated muscle contraction (PubMed:22812662). Smooth muscle contraction is regulated by interaction with caldesmon. In non-muscle cells is implicated in stabilizing cytoskeleton actin filaments. The non-muscle isoform may have a role in agonist-mediated receptor internalization (By similarity).</text>
</comment>
<comment type="subunit">
    <text evidence="7 8">Homodimer (PubMed:22812662, PubMed:7568216). Heterodimer of an alpha (TPM1, TPM3 or TPM4) and a beta (TPM2) chain (PubMed:22812662, PubMed:7568216).</text>
</comment>
<comment type="subcellular location">
    <subcellularLocation>
        <location evidence="8">Cytoplasm</location>
        <location evidence="8">Cytoskeleton</location>
    </subcellularLocation>
    <text evidence="8">Associates with F-actin stress fibers (PubMed:7568216).</text>
</comment>
<comment type="alternative products">
    <event type="alternative splicing"/>
    <isoform>
        <id>P58775-1</id>
        <name>1</name>
        <name>Skeletal muscle</name>
        <sequence type="displayed"/>
    </isoform>
    <isoform>
        <id>P58775-2</id>
        <name>2</name>
        <name>non-muscle</name>
        <name>Fibroblast</name>
        <name>Embryonic fibroblast TM-1</name>
        <sequence type="described" ref="VSP_006599 VSP_006600"/>
    </isoform>
</comment>
<comment type="domain">
    <text>The molecule is in a coiled coil structure that is formed by 2 polypeptide chains. The sequence exhibits a prominent seven-residues periodicity.</text>
</comment>
<comment type="PTM">
    <text evidence="1">Phosphorylated on Ser-61 by PIK3CG. Phosphorylation on Ser-61 is required for ADRB2 internalization (By similarity).</text>
</comment>
<comment type="similarity">
    <text evidence="9">Belongs to the tropomyosin family.</text>
</comment>
<keyword id="KW-0002">3D-structure</keyword>
<keyword id="KW-0007">Acetylation</keyword>
<keyword id="KW-0009">Actin-binding</keyword>
<keyword id="KW-0025">Alternative splicing</keyword>
<keyword id="KW-0175">Coiled coil</keyword>
<keyword id="KW-0963">Cytoplasm</keyword>
<keyword id="KW-0206">Cytoskeleton</keyword>
<keyword id="KW-0514">Muscle protein</keyword>
<keyword id="KW-0597">Phosphoprotein</keyword>
<keyword id="KW-1185">Reference proteome</keyword>
<organism>
    <name type="scientific">Rattus norvegicus</name>
    <name type="common">Rat</name>
    <dbReference type="NCBI Taxonomy" id="10116"/>
    <lineage>
        <taxon>Eukaryota</taxon>
        <taxon>Metazoa</taxon>
        <taxon>Chordata</taxon>
        <taxon>Craniata</taxon>
        <taxon>Vertebrata</taxon>
        <taxon>Euteleostomi</taxon>
        <taxon>Mammalia</taxon>
        <taxon>Eutheria</taxon>
        <taxon>Euarchontoglires</taxon>
        <taxon>Glires</taxon>
        <taxon>Rodentia</taxon>
        <taxon>Myomorpha</taxon>
        <taxon>Muroidea</taxon>
        <taxon>Muridae</taxon>
        <taxon>Murinae</taxon>
        <taxon>Rattus</taxon>
    </lineage>
</organism>
<reference key="1">
    <citation type="journal article" date="1985" name="J. Biol. Chem.">
        <title>Rat embryonic fibroblast tropomyosin 1. cDNA and complete primary amino acid sequence.</title>
        <authorList>
            <person name="Yamawaki-Kataoka Y."/>
            <person name="Helfman D.M."/>
        </authorList>
    </citation>
    <scope>NUCLEOTIDE SEQUENCE [GENOMIC DNA] (ISOFORMS 1 AND 2)</scope>
</reference>
<reference key="2">
    <citation type="journal article" date="1986" name="Mol. Cell. Biol.">
        <title>Nonmuscle and muscle tropomyosin isoforms are expressed from a single gene by alternative RNA splicing and polyadenylation.</title>
        <authorList>
            <person name="Helfman D.M."/>
            <person name="Cheley S."/>
            <person name="Kuismanen E."/>
            <person name="Finn L.A."/>
            <person name="Yamawaki-Kataoka Y."/>
        </authorList>
    </citation>
    <scope>NUCLEOTIDE SEQUENCE [GENOMIC DNA] (ISOFORMS 1 AND 2)</scope>
</reference>
<reference key="3">
    <citation type="journal article" date="1995" name="Proc. Natl. Acad. Sci. U.S.A.">
        <title>Specificity of dimer formation in tropomyosins: influence of alternatively spliced exons on homodimer and heterodimer assembly.</title>
        <authorList>
            <person name="Gimona M."/>
            <person name="Watakabe A."/>
            <person name="Helfman D.M."/>
        </authorList>
    </citation>
    <scope>FUNCTION</scope>
    <scope>SUBUNIT</scope>
    <scope>SUBCELLULAR LOCATION</scope>
</reference>
<reference key="4">
    <citation type="journal article" date="2012" name="Biochemistry">
        <title>In vitro formation and characterization of the skeletal muscle alpha.beta tropomyosin heterodimers.</title>
        <authorList>
            <person name="Kalyva A."/>
            <person name="Schmidtmann A."/>
            <person name="Geeves M.A."/>
        </authorList>
    </citation>
    <scope>FUNCTION</scope>
    <scope>SUBUNIT</scope>
</reference>
<reference key="5">
    <citation type="journal article" date="2012" name="Nat. Commun.">
        <title>Quantitative maps of protein phosphorylation sites across 14 different rat organs and tissues.</title>
        <authorList>
            <person name="Lundby A."/>
            <person name="Secher A."/>
            <person name="Lage K."/>
            <person name="Nordsborg N.B."/>
            <person name="Dmytriyev A."/>
            <person name="Lundby C."/>
            <person name="Olsen J.V."/>
        </authorList>
    </citation>
    <scope>PHOSPHORYLATION [LARGE SCALE ANALYSIS] AT SER-61; SER-206; SER-215; THR-252; TYR-261 AND SER-271</scope>
    <scope>PHOSPHORYLATION [LARGE SCALE ANALYSIS] AT SER-210 (ISOFORM 2)</scope>
    <scope>IDENTIFICATION BY MASS SPECTROMETRY [LARGE SCALE ANALYSIS]</scope>
</reference>
<evidence type="ECO:0000250" key="1"/>
<evidence type="ECO:0000250" key="2">
    <source>
        <dbReference type="UniProtKB" id="P06753"/>
    </source>
</evidence>
<evidence type="ECO:0000250" key="3">
    <source>
        <dbReference type="UniProtKB" id="P07951"/>
    </source>
</evidence>
<evidence type="ECO:0000250" key="4">
    <source>
        <dbReference type="UniProtKB" id="P58774"/>
    </source>
</evidence>
<evidence type="ECO:0000250" key="5">
    <source>
        <dbReference type="UniProtKB" id="P58776"/>
    </source>
</evidence>
<evidence type="ECO:0000256" key="6">
    <source>
        <dbReference type="SAM" id="MobiDB-lite"/>
    </source>
</evidence>
<evidence type="ECO:0000269" key="7">
    <source>
    </source>
</evidence>
<evidence type="ECO:0000269" key="8">
    <source>
    </source>
</evidence>
<evidence type="ECO:0000305" key="9"/>
<evidence type="ECO:0007744" key="10">
    <source>
    </source>
</evidence>
<gene>
    <name type="primary">Tpm2</name>
</gene>
<dbReference type="EMBL" id="L00381">
    <property type="protein sequence ID" value="AAA42288.1"/>
    <property type="molecule type" value="Genomic_DNA"/>
</dbReference>
<dbReference type="EMBL" id="L00372">
    <property type="protein sequence ID" value="AAA42288.1"/>
    <property type="status" value="JOINED"/>
    <property type="molecule type" value="Genomic_DNA"/>
</dbReference>
<dbReference type="EMBL" id="L00373">
    <property type="protein sequence ID" value="AAA42288.1"/>
    <property type="status" value="JOINED"/>
    <property type="molecule type" value="Genomic_DNA"/>
</dbReference>
<dbReference type="EMBL" id="L00374">
    <property type="protein sequence ID" value="AAA42288.1"/>
    <property type="status" value="JOINED"/>
    <property type="molecule type" value="Genomic_DNA"/>
</dbReference>
<dbReference type="EMBL" id="L00375">
    <property type="protein sequence ID" value="AAA42288.1"/>
    <property type="status" value="JOINED"/>
    <property type="molecule type" value="Genomic_DNA"/>
</dbReference>
<dbReference type="EMBL" id="L00376">
    <property type="protein sequence ID" value="AAA42288.1"/>
    <property type="status" value="JOINED"/>
    <property type="molecule type" value="Genomic_DNA"/>
</dbReference>
<dbReference type="EMBL" id="L00378">
    <property type="protein sequence ID" value="AAA42288.1"/>
    <property type="status" value="JOINED"/>
    <property type="molecule type" value="Genomic_DNA"/>
</dbReference>
<dbReference type="EMBL" id="L00379">
    <property type="protein sequence ID" value="AAA42288.1"/>
    <property type="status" value="JOINED"/>
    <property type="molecule type" value="Genomic_DNA"/>
</dbReference>
<dbReference type="EMBL" id="L00380">
    <property type="protein sequence ID" value="AAA42288.1"/>
    <property type="status" value="JOINED"/>
    <property type="molecule type" value="Genomic_DNA"/>
</dbReference>
<dbReference type="EMBL" id="L00382">
    <property type="protein sequence ID" value="AAA42289.1"/>
    <property type="molecule type" value="Genomic_DNA"/>
</dbReference>
<dbReference type="EMBL" id="L00372">
    <property type="protein sequence ID" value="AAA42289.1"/>
    <property type="status" value="JOINED"/>
    <property type="molecule type" value="Genomic_DNA"/>
</dbReference>
<dbReference type="EMBL" id="L00373">
    <property type="protein sequence ID" value="AAA42289.1"/>
    <property type="status" value="JOINED"/>
    <property type="molecule type" value="Genomic_DNA"/>
</dbReference>
<dbReference type="EMBL" id="L00374">
    <property type="protein sequence ID" value="AAA42289.1"/>
    <property type="status" value="JOINED"/>
    <property type="molecule type" value="Genomic_DNA"/>
</dbReference>
<dbReference type="EMBL" id="L00375">
    <property type="protein sequence ID" value="AAA42289.1"/>
    <property type="status" value="JOINED"/>
    <property type="molecule type" value="Genomic_DNA"/>
</dbReference>
<dbReference type="EMBL" id="L00376">
    <property type="protein sequence ID" value="AAA42289.1"/>
    <property type="status" value="JOINED"/>
    <property type="molecule type" value="Genomic_DNA"/>
</dbReference>
<dbReference type="EMBL" id="L00377">
    <property type="protein sequence ID" value="AAA42289.1"/>
    <property type="status" value="JOINED"/>
    <property type="molecule type" value="Genomic_DNA"/>
</dbReference>
<dbReference type="EMBL" id="L00379">
    <property type="protein sequence ID" value="AAA42289.1"/>
    <property type="status" value="JOINED"/>
    <property type="molecule type" value="Genomic_DNA"/>
</dbReference>
<dbReference type="EMBL" id="L00380">
    <property type="protein sequence ID" value="AAA42289.1"/>
    <property type="status" value="JOINED"/>
    <property type="molecule type" value="Genomic_DNA"/>
</dbReference>
<dbReference type="PIR" id="A02981">
    <property type="entry name" value="TMRTF1"/>
</dbReference>
<dbReference type="PIR" id="B25073">
    <property type="entry name" value="B25073"/>
</dbReference>
<dbReference type="RefSeq" id="NP_001019516.1">
    <molecule id="P58775-2"/>
    <property type="nucleotide sequence ID" value="NM_001024345.2"/>
</dbReference>
<dbReference type="RefSeq" id="NP_001288164.1">
    <molecule id="P58775-1"/>
    <property type="nucleotide sequence ID" value="NM_001301235.1"/>
</dbReference>
<dbReference type="PDB" id="8ZBM">
    <property type="method" value="EM"/>
    <property type="resolution" value="3.32 A"/>
    <property type="chains" value="B/C/F/G=45-210"/>
</dbReference>
<dbReference type="PDBsum" id="8ZBM"/>
<dbReference type="EMDB" id="EMD-39905"/>
<dbReference type="SMR" id="P58775"/>
<dbReference type="BioGRID" id="271758">
    <property type="interactions" value="2"/>
</dbReference>
<dbReference type="FunCoup" id="P58775">
    <property type="interactions" value="69"/>
</dbReference>
<dbReference type="STRING" id="10116.ENSRNOP00000022801"/>
<dbReference type="GlyGen" id="P58775">
    <property type="glycosylation" value="1 site, 1 O-linked glycan (1 site)"/>
</dbReference>
<dbReference type="iPTMnet" id="P58775"/>
<dbReference type="PhosphoSitePlus" id="P58775"/>
<dbReference type="jPOST" id="P58775"/>
<dbReference type="PaxDb" id="10116-ENSRNOP00000022801"/>
<dbReference type="Ensembl" id="ENSRNOT00000022801.7">
    <molecule id="P58775-1"/>
    <property type="protein sequence ID" value="ENSRNOP00000022801.6"/>
    <property type="gene ID" value="ENSRNOG00000016731.9"/>
</dbReference>
<dbReference type="Ensembl" id="ENSRNOT00000049000.7">
    <molecule id="P58775-2"/>
    <property type="protein sequence ID" value="ENSRNOP00000044473.4"/>
    <property type="gene ID" value="ENSRNOG00000016731.9"/>
</dbReference>
<dbReference type="GeneID" id="500450"/>
<dbReference type="KEGG" id="rno:500450"/>
<dbReference type="UCSC" id="RGD:1559479">
    <molecule id="P58775-1"/>
    <property type="organism name" value="rat"/>
</dbReference>
<dbReference type="AGR" id="RGD:1559479"/>
<dbReference type="CTD" id="7169"/>
<dbReference type="RGD" id="1559479">
    <property type="gene designation" value="Tpm2"/>
</dbReference>
<dbReference type="eggNOG" id="KOG1003">
    <property type="taxonomic scope" value="Eukaryota"/>
</dbReference>
<dbReference type="GeneTree" id="ENSGT01030000234542"/>
<dbReference type="HOGENOM" id="CLU_055027_0_0_1"/>
<dbReference type="InParanoid" id="P58775"/>
<dbReference type="OMA" id="FYDADQT"/>
<dbReference type="OrthoDB" id="128924at2759"/>
<dbReference type="PhylomeDB" id="P58775"/>
<dbReference type="Reactome" id="R-RNO-390522">
    <property type="pathway name" value="Striated Muscle Contraction"/>
</dbReference>
<dbReference type="Reactome" id="R-RNO-445355">
    <property type="pathway name" value="Smooth Muscle Contraction"/>
</dbReference>
<dbReference type="PRO" id="PR:P58775"/>
<dbReference type="Proteomes" id="UP000002494">
    <property type="component" value="Chromosome 5"/>
</dbReference>
<dbReference type="Bgee" id="ENSRNOG00000016731">
    <property type="expression patterns" value="Expressed in skeletal muscle tissue and 19 other cell types or tissues"/>
</dbReference>
<dbReference type="ExpressionAtlas" id="P58775">
    <property type="expression patterns" value="baseline and differential"/>
</dbReference>
<dbReference type="GO" id="GO:0015629">
    <property type="term" value="C:actin cytoskeleton"/>
    <property type="evidence" value="ECO:0000314"/>
    <property type="project" value="UniProtKB"/>
</dbReference>
<dbReference type="GO" id="GO:0005884">
    <property type="term" value="C:actin filament"/>
    <property type="evidence" value="ECO:0000318"/>
    <property type="project" value="GO_Central"/>
</dbReference>
<dbReference type="GO" id="GO:0005737">
    <property type="term" value="C:cytoplasm"/>
    <property type="evidence" value="ECO:0007669"/>
    <property type="project" value="UniProtKB-KW"/>
</dbReference>
<dbReference type="GO" id="GO:0003779">
    <property type="term" value="F:actin binding"/>
    <property type="evidence" value="ECO:0000266"/>
    <property type="project" value="RGD"/>
</dbReference>
<dbReference type="GO" id="GO:0051015">
    <property type="term" value="F:actin filament binding"/>
    <property type="evidence" value="ECO:0000314"/>
    <property type="project" value="UniProtKB"/>
</dbReference>
<dbReference type="GO" id="GO:0042802">
    <property type="term" value="F:identical protein binding"/>
    <property type="evidence" value="ECO:0000314"/>
    <property type="project" value="UniProtKB"/>
</dbReference>
<dbReference type="GO" id="GO:0046982">
    <property type="term" value="F:protein heterodimerization activity"/>
    <property type="evidence" value="ECO:0000314"/>
    <property type="project" value="UniProtKB"/>
</dbReference>
<dbReference type="GO" id="GO:0042803">
    <property type="term" value="F:protein homodimerization activity"/>
    <property type="evidence" value="ECO:0000314"/>
    <property type="project" value="UniProtKB"/>
</dbReference>
<dbReference type="GO" id="GO:0007015">
    <property type="term" value="P:actin filament organization"/>
    <property type="evidence" value="ECO:0000318"/>
    <property type="project" value="GO_Central"/>
</dbReference>
<dbReference type="GO" id="GO:0006936">
    <property type="term" value="P:muscle contraction"/>
    <property type="evidence" value="ECO:0000318"/>
    <property type="project" value="GO_Central"/>
</dbReference>
<dbReference type="FunFam" id="1.20.5.1160:FF:000013">
    <property type="entry name" value="Tropomyosin 1 (alpha)"/>
    <property type="match status" value="1"/>
</dbReference>
<dbReference type="FunFam" id="1.20.5.170:FF:000005">
    <property type="entry name" value="Tropomyosin alpha-1 chain"/>
    <property type="match status" value="1"/>
</dbReference>
<dbReference type="FunFam" id="1.20.5.170:FF:000001">
    <property type="entry name" value="Tropomyosin alpha-1 chain isoform 1"/>
    <property type="match status" value="1"/>
</dbReference>
<dbReference type="FunFam" id="1.20.5.340:FF:000001">
    <property type="entry name" value="Tropomyosin alpha-1 chain isoform 2"/>
    <property type="match status" value="1"/>
</dbReference>
<dbReference type="Gene3D" id="1.20.5.170">
    <property type="match status" value="2"/>
</dbReference>
<dbReference type="Gene3D" id="1.20.5.340">
    <property type="match status" value="1"/>
</dbReference>
<dbReference type="InterPro" id="IPR000533">
    <property type="entry name" value="Tropomyosin"/>
</dbReference>
<dbReference type="PANTHER" id="PTHR19269">
    <property type="entry name" value="TROPOMYOSIN"/>
    <property type="match status" value="1"/>
</dbReference>
<dbReference type="Pfam" id="PF00261">
    <property type="entry name" value="Tropomyosin"/>
    <property type="match status" value="1"/>
</dbReference>
<dbReference type="PRINTS" id="PR00194">
    <property type="entry name" value="TROPOMYOSIN"/>
</dbReference>
<dbReference type="SUPFAM" id="SSF57997">
    <property type="entry name" value="Tropomyosin"/>
    <property type="match status" value="1"/>
</dbReference>
<dbReference type="PROSITE" id="PS00326">
    <property type="entry name" value="TROPOMYOSIN"/>
    <property type="match status" value="1"/>
</dbReference>
<accession>P58775</accession>
<accession>P02560</accession>
<accession>P06395</accession>
<protein>
    <recommendedName>
        <fullName>Tropomyosin beta chain</fullName>
    </recommendedName>
    <alternativeName>
        <fullName>Beta-tropomyosin</fullName>
    </alternativeName>
    <alternativeName>
        <fullName>Tropomyosin-2</fullName>
    </alternativeName>
</protein>
<proteinExistence type="evidence at protein level"/>
<feature type="chain" id="PRO_0000205629" description="Tropomyosin beta chain">
    <location>
        <begin position="1"/>
        <end position="284"/>
    </location>
</feature>
<feature type="region of interest" description="Disordered" evidence="6">
    <location>
        <begin position="1"/>
        <end position="78"/>
    </location>
</feature>
<feature type="region of interest" description="Disordered" evidence="6">
    <location>
        <begin position="117"/>
        <end position="136"/>
    </location>
</feature>
<feature type="coiled-coil region" evidence="1">
    <location>
        <begin position="1"/>
        <end position="284"/>
    </location>
</feature>
<feature type="compositionally biased region" description="Basic and acidic residues" evidence="6">
    <location>
        <begin position="12"/>
        <end position="40"/>
    </location>
</feature>
<feature type="compositionally biased region" description="Basic and acidic residues" evidence="6">
    <location>
        <begin position="51"/>
        <end position="78"/>
    </location>
</feature>
<feature type="modified residue" description="N-acetylmethionine" evidence="5">
    <location>
        <position position="1"/>
    </location>
</feature>
<feature type="modified residue" description="Phosphothreonine" evidence="3">
    <location>
        <position position="53"/>
    </location>
</feature>
<feature type="modified residue" description="Phosphoserine" evidence="10">
    <location>
        <position position="61"/>
    </location>
</feature>
<feature type="modified residue" description="Phosphothreonine" evidence="3">
    <location>
        <position position="79"/>
    </location>
</feature>
<feature type="modified residue" description="Phosphoserine" evidence="2">
    <location>
        <position position="87"/>
    </location>
</feature>
<feature type="modified residue" description="Phosphothreonine" evidence="3">
    <location>
        <position position="108"/>
    </location>
</feature>
<feature type="modified residue" description="Phosphoserine" evidence="3">
    <location>
        <position position="158"/>
    </location>
</feature>
<feature type="modified residue" description="Phosphoserine" evidence="10">
    <location>
        <position position="206"/>
    </location>
</feature>
<feature type="modified residue" description="Phosphoserine" evidence="10">
    <location>
        <position position="215"/>
    </location>
</feature>
<feature type="modified residue" description="Phosphothreonine" evidence="10">
    <location>
        <position position="252"/>
    </location>
</feature>
<feature type="modified residue" description="Phosphotyrosine" evidence="10">
    <location>
        <position position="261"/>
    </location>
</feature>
<feature type="modified residue" description="Phosphoserine" evidence="10">
    <location>
        <position position="271"/>
    </location>
</feature>
<feature type="modified residue" description="Phosphothreonine" evidence="3">
    <location>
        <position position="282"/>
    </location>
</feature>
<feature type="modified residue" description="Phosphoserine" evidence="3">
    <location>
        <position position="283"/>
    </location>
</feature>
<feature type="splice variant" id="VSP_006599" description="In isoform 2." evidence="9">
    <original>KCGDLEEELKIVTNNLKSLEAQADK</original>
    <variation>RARQLEEELRTMDQALKSLIASEEE</variation>
    <location>
        <begin position="189"/>
        <end position="213"/>
    </location>
</feature>
<feature type="splice variant" id="VSP_006600" description="In isoform 2." evidence="9">
    <original>DEVYAQKMKYKAISEELDNALNDITSL</original>
    <variation>ETLASAKEENVEIHQTLDQTLLELNNL</variation>
    <location>
        <begin position="258"/>
        <end position="284"/>
    </location>
</feature>
<feature type="modified residue" description="Phosphoserine" evidence="10">
    <location sequence="P58775-2">
        <position position="210"/>
    </location>
</feature>
<sequence length="284" mass="32837">MDAIKKKMQMLKLDKENAIDRAEQAEADKKQAEDRCKQLEEEQQALQKKLKGTEDEVEKYSESVKDAQEKLEQAEKKATDAEADVASLNRRIQLVEEELDRAQERLATALQKLEEAEKAADESERGMKVIENRAMKDEEKMELQEMQLKEAKHIAEDSDRKYEEVARKLVILEGELERSEERAEVAESKCGDLEEELKIVTNNLKSLEAQADKYSTKEDKYEEEIKLLEEKLKEAETRAEFAERSVAKLEKTIDDLEDEVYAQKMKYKAISEELDNALNDITSL</sequence>
<name>TPM2_RAT</name>